<sequence>MTRKYFGTDGVRGKVGESPITPDFVMRLGHAAGKVLAHGASTGQGRPTVLIGKDTRISGYMLEAALEAGFTSAGVHVLLTGPLPTPGIAYLTRALRLSAGVVISASHNPYYDNGIKFFSADGDKLPDEVEAKIEAALEEPMTCAPSDDLGRARRINDAPGRYIEFCKSTFPNSQDLRGLKLVVDCAHGAAYHIAPHVFHELGADVIAIGNQPDGRNINDGYGATAPGKLIEAVREHGADLGLAFDGDADRLQVVDSEGRLYNGDELLYLIVRDRMAAGFAVEGAVGTLMTNMAVELALKRIGVEFVRAKVGDRYVLEELNKRHWTLGGEGSGHLLCLDRHSTGDGIVSALQVLAALRRSGKTLAGLLDGVSLFPQKLINVRVEKGFDWQSHAGLKAARAVVEPELAGRGRVLIRASGTEPVVRVMVEAEHAETAERAAQTLAEALRA</sequence>
<proteinExistence type="inferred from homology"/>
<protein>
    <recommendedName>
        <fullName evidence="1">Phosphoglucosamine mutase</fullName>
        <ecNumber evidence="1">5.4.2.10</ecNumber>
    </recommendedName>
</protein>
<feature type="chain" id="PRO_0000147945" description="Phosphoglucosamine mutase">
    <location>
        <begin position="1"/>
        <end position="447"/>
    </location>
</feature>
<feature type="active site" description="Phosphoserine intermediate" evidence="1">
    <location>
        <position position="106"/>
    </location>
</feature>
<feature type="binding site" description="via phosphate group" evidence="1">
    <location>
        <position position="106"/>
    </location>
    <ligand>
        <name>Mg(2+)</name>
        <dbReference type="ChEBI" id="CHEBI:18420"/>
    </ligand>
</feature>
<feature type="binding site" evidence="1">
    <location>
        <position position="245"/>
    </location>
    <ligand>
        <name>Mg(2+)</name>
        <dbReference type="ChEBI" id="CHEBI:18420"/>
    </ligand>
</feature>
<feature type="binding site" evidence="1">
    <location>
        <position position="247"/>
    </location>
    <ligand>
        <name>Mg(2+)</name>
        <dbReference type="ChEBI" id="CHEBI:18420"/>
    </ligand>
</feature>
<feature type="binding site" evidence="1">
    <location>
        <position position="249"/>
    </location>
    <ligand>
        <name>Mg(2+)</name>
        <dbReference type="ChEBI" id="CHEBI:18420"/>
    </ligand>
</feature>
<feature type="modified residue" description="Phosphoserine" evidence="1">
    <location>
        <position position="106"/>
    </location>
</feature>
<gene>
    <name evidence="1" type="primary">glmM</name>
    <name type="ordered locus">Reut_A2168</name>
</gene>
<keyword id="KW-0413">Isomerase</keyword>
<keyword id="KW-0460">Magnesium</keyword>
<keyword id="KW-0479">Metal-binding</keyword>
<keyword id="KW-0597">Phosphoprotein</keyword>
<reference key="1">
    <citation type="journal article" date="2010" name="PLoS ONE">
        <title>The complete multipartite genome sequence of Cupriavidus necator JMP134, a versatile pollutant degrader.</title>
        <authorList>
            <person name="Lykidis A."/>
            <person name="Perez-Pantoja D."/>
            <person name="Ledger T."/>
            <person name="Mavromatis K."/>
            <person name="Anderson I.J."/>
            <person name="Ivanova N.N."/>
            <person name="Hooper S.D."/>
            <person name="Lapidus A."/>
            <person name="Lucas S."/>
            <person name="Gonzalez B."/>
            <person name="Kyrpides N.C."/>
        </authorList>
    </citation>
    <scope>NUCLEOTIDE SEQUENCE [LARGE SCALE GENOMIC DNA]</scope>
    <source>
        <strain>JMP134 / LMG 1197</strain>
    </source>
</reference>
<name>GLMM_CUPPJ</name>
<comment type="function">
    <text evidence="1">Catalyzes the conversion of glucosamine-6-phosphate to glucosamine-1-phosphate.</text>
</comment>
<comment type="catalytic activity">
    <reaction evidence="1">
        <text>alpha-D-glucosamine 1-phosphate = D-glucosamine 6-phosphate</text>
        <dbReference type="Rhea" id="RHEA:23424"/>
        <dbReference type="ChEBI" id="CHEBI:58516"/>
        <dbReference type="ChEBI" id="CHEBI:58725"/>
        <dbReference type="EC" id="5.4.2.10"/>
    </reaction>
</comment>
<comment type="cofactor">
    <cofactor evidence="1">
        <name>Mg(2+)</name>
        <dbReference type="ChEBI" id="CHEBI:18420"/>
    </cofactor>
    <text evidence="1">Binds 1 Mg(2+) ion per subunit.</text>
</comment>
<comment type="PTM">
    <text evidence="1">Activated by phosphorylation.</text>
</comment>
<comment type="similarity">
    <text evidence="1">Belongs to the phosphohexose mutase family.</text>
</comment>
<organism>
    <name type="scientific">Cupriavidus pinatubonensis (strain JMP 134 / LMG 1197)</name>
    <name type="common">Cupriavidus necator (strain JMP 134)</name>
    <dbReference type="NCBI Taxonomy" id="264198"/>
    <lineage>
        <taxon>Bacteria</taxon>
        <taxon>Pseudomonadati</taxon>
        <taxon>Pseudomonadota</taxon>
        <taxon>Betaproteobacteria</taxon>
        <taxon>Burkholderiales</taxon>
        <taxon>Burkholderiaceae</taxon>
        <taxon>Cupriavidus</taxon>
    </lineage>
</organism>
<dbReference type="EC" id="5.4.2.10" evidence="1"/>
<dbReference type="EMBL" id="CP000090">
    <property type="protein sequence ID" value="AAZ61532.1"/>
    <property type="molecule type" value="Genomic_DNA"/>
</dbReference>
<dbReference type="SMR" id="Q46ZA1"/>
<dbReference type="STRING" id="264198.Reut_A2168"/>
<dbReference type="KEGG" id="reu:Reut_A2168"/>
<dbReference type="eggNOG" id="COG1109">
    <property type="taxonomic scope" value="Bacteria"/>
</dbReference>
<dbReference type="HOGENOM" id="CLU_016950_7_0_4"/>
<dbReference type="OrthoDB" id="9803322at2"/>
<dbReference type="GO" id="GO:0005829">
    <property type="term" value="C:cytosol"/>
    <property type="evidence" value="ECO:0007669"/>
    <property type="project" value="TreeGrafter"/>
</dbReference>
<dbReference type="GO" id="GO:0000287">
    <property type="term" value="F:magnesium ion binding"/>
    <property type="evidence" value="ECO:0007669"/>
    <property type="project" value="UniProtKB-UniRule"/>
</dbReference>
<dbReference type="GO" id="GO:0008966">
    <property type="term" value="F:phosphoglucosamine mutase activity"/>
    <property type="evidence" value="ECO:0007669"/>
    <property type="project" value="UniProtKB-UniRule"/>
</dbReference>
<dbReference type="GO" id="GO:0004615">
    <property type="term" value="F:phosphomannomutase activity"/>
    <property type="evidence" value="ECO:0007669"/>
    <property type="project" value="TreeGrafter"/>
</dbReference>
<dbReference type="GO" id="GO:0005975">
    <property type="term" value="P:carbohydrate metabolic process"/>
    <property type="evidence" value="ECO:0007669"/>
    <property type="project" value="InterPro"/>
</dbReference>
<dbReference type="GO" id="GO:0009252">
    <property type="term" value="P:peptidoglycan biosynthetic process"/>
    <property type="evidence" value="ECO:0007669"/>
    <property type="project" value="TreeGrafter"/>
</dbReference>
<dbReference type="GO" id="GO:0006048">
    <property type="term" value="P:UDP-N-acetylglucosamine biosynthetic process"/>
    <property type="evidence" value="ECO:0007669"/>
    <property type="project" value="TreeGrafter"/>
</dbReference>
<dbReference type="CDD" id="cd05802">
    <property type="entry name" value="GlmM"/>
    <property type="match status" value="1"/>
</dbReference>
<dbReference type="FunFam" id="3.30.310.50:FF:000001">
    <property type="entry name" value="Phosphoglucosamine mutase"/>
    <property type="match status" value="1"/>
</dbReference>
<dbReference type="FunFam" id="3.40.120.10:FF:000001">
    <property type="entry name" value="Phosphoglucosamine mutase"/>
    <property type="match status" value="1"/>
</dbReference>
<dbReference type="FunFam" id="3.40.120.10:FF:000003">
    <property type="entry name" value="Phosphoglucosamine mutase"/>
    <property type="match status" value="1"/>
</dbReference>
<dbReference type="Gene3D" id="3.40.120.10">
    <property type="entry name" value="Alpha-D-Glucose-1,6-Bisphosphate, subunit A, domain 3"/>
    <property type="match status" value="3"/>
</dbReference>
<dbReference type="Gene3D" id="3.30.310.50">
    <property type="entry name" value="Alpha-D-phosphohexomutase, C-terminal domain"/>
    <property type="match status" value="1"/>
</dbReference>
<dbReference type="HAMAP" id="MF_01554_B">
    <property type="entry name" value="GlmM_B"/>
    <property type="match status" value="1"/>
</dbReference>
<dbReference type="InterPro" id="IPR005844">
    <property type="entry name" value="A-D-PHexomutase_a/b/a-I"/>
</dbReference>
<dbReference type="InterPro" id="IPR016055">
    <property type="entry name" value="A-D-PHexomutase_a/b/a-I/II/III"/>
</dbReference>
<dbReference type="InterPro" id="IPR005845">
    <property type="entry name" value="A-D-PHexomutase_a/b/a-II"/>
</dbReference>
<dbReference type="InterPro" id="IPR005846">
    <property type="entry name" value="A-D-PHexomutase_a/b/a-III"/>
</dbReference>
<dbReference type="InterPro" id="IPR005843">
    <property type="entry name" value="A-D-PHexomutase_C"/>
</dbReference>
<dbReference type="InterPro" id="IPR036900">
    <property type="entry name" value="A-D-PHexomutase_C_sf"/>
</dbReference>
<dbReference type="InterPro" id="IPR016066">
    <property type="entry name" value="A-D-PHexomutase_CS"/>
</dbReference>
<dbReference type="InterPro" id="IPR005841">
    <property type="entry name" value="Alpha-D-phosphohexomutase_SF"/>
</dbReference>
<dbReference type="InterPro" id="IPR006352">
    <property type="entry name" value="GlmM_bact"/>
</dbReference>
<dbReference type="InterPro" id="IPR050060">
    <property type="entry name" value="Phosphoglucosamine_mutase"/>
</dbReference>
<dbReference type="NCBIfam" id="TIGR01455">
    <property type="entry name" value="glmM"/>
    <property type="match status" value="1"/>
</dbReference>
<dbReference type="NCBIfam" id="NF008139">
    <property type="entry name" value="PRK10887.1"/>
    <property type="match status" value="1"/>
</dbReference>
<dbReference type="PANTHER" id="PTHR42946:SF1">
    <property type="entry name" value="PHOSPHOGLUCOMUTASE (ALPHA-D-GLUCOSE-1,6-BISPHOSPHATE-DEPENDENT)"/>
    <property type="match status" value="1"/>
</dbReference>
<dbReference type="PANTHER" id="PTHR42946">
    <property type="entry name" value="PHOSPHOHEXOSE MUTASE"/>
    <property type="match status" value="1"/>
</dbReference>
<dbReference type="Pfam" id="PF02878">
    <property type="entry name" value="PGM_PMM_I"/>
    <property type="match status" value="1"/>
</dbReference>
<dbReference type="Pfam" id="PF02879">
    <property type="entry name" value="PGM_PMM_II"/>
    <property type="match status" value="1"/>
</dbReference>
<dbReference type="Pfam" id="PF02880">
    <property type="entry name" value="PGM_PMM_III"/>
    <property type="match status" value="1"/>
</dbReference>
<dbReference type="Pfam" id="PF00408">
    <property type="entry name" value="PGM_PMM_IV"/>
    <property type="match status" value="1"/>
</dbReference>
<dbReference type="PRINTS" id="PR00509">
    <property type="entry name" value="PGMPMM"/>
</dbReference>
<dbReference type="SUPFAM" id="SSF55957">
    <property type="entry name" value="Phosphoglucomutase, C-terminal domain"/>
    <property type="match status" value="1"/>
</dbReference>
<dbReference type="SUPFAM" id="SSF53738">
    <property type="entry name" value="Phosphoglucomutase, first 3 domains"/>
    <property type="match status" value="3"/>
</dbReference>
<dbReference type="PROSITE" id="PS00710">
    <property type="entry name" value="PGM_PMM"/>
    <property type="match status" value="1"/>
</dbReference>
<evidence type="ECO:0000255" key="1">
    <source>
        <dbReference type="HAMAP-Rule" id="MF_01554"/>
    </source>
</evidence>
<accession>Q46ZA1</accession>